<proteinExistence type="inferred from homology"/>
<comment type="similarity">
    <text evidence="1">Belongs to the bacterial ribosomal protein bS16 family.</text>
</comment>
<organism>
    <name type="scientific">Jannaschia sp. (strain CCS1)</name>
    <dbReference type="NCBI Taxonomy" id="290400"/>
    <lineage>
        <taxon>Bacteria</taxon>
        <taxon>Pseudomonadati</taxon>
        <taxon>Pseudomonadota</taxon>
        <taxon>Alphaproteobacteria</taxon>
        <taxon>Rhodobacterales</taxon>
        <taxon>Roseobacteraceae</taxon>
        <taxon>Jannaschia</taxon>
    </lineage>
</organism>
<sequence>MAMKIRLARGGSKKRPFYRIVASDSRMPRDGRFIEKLGTYNPLLPKDSEDRVKMDMERVQHWLDQGAQPTDRISRFLEAAGHTPKKERANMKKAQPGKKAVERAEEKAAKASAAAEAPAEAPAAEAAAEE</sequence>
<gene>
    <name evidence="1" type="primary">rpsP</name>
    <name type="ordered locus">Jann_0749</name>
</gene>
<name>RS16_JANSC</name>
<accession>Q28UE6</accession>
<feature type="chain" id="PRO_0000243816" description="Small ribosomal subunit protein bS16">
    <location>
        <begin position="1"/>
        <end position="130"/>
    </location>
</feature>
<feature type="region of interest" description="Disordered" evidence="2">
    <location>
        <begin position="80"/>
        <end position="130"/>
    </location>
</feature>
<feature type="compositionally biased region" description="Basic and acidic residues" evidence="2">
    <location>
        <begin position="99"/>
        <end position="109"/>
    </location>
</feature>
<feature type="compositionally biased region" description="Low complexity" evidence="2">
    <location>
        <begin position="110"/>
        <end position="130"/>
    </location>
</feature>
<evidence type="ECO:0000255" key="1">
    <source>
        <dbReference type="HAMAP-Rule" id="MF_00385"/>
    </source>
</evidence>
<evidence type="ECO:0000256" key="2">
    <source>
        <dbReference type="SAM" id="MobiDB-lite"/>
    </source>
</evidence>
<evidence type="ECO:0000305" key="3"/>
<protein>
    <recommendedName>
        <fullName evidence="1">Small ribosomal subunit protein bS16</fullName>
    </recommendedName>
    <alternativeName>
        <fullName evidence="3">30S ribosomal protein S16</fullName>
    </alternativeName>
</protein>
<keyword id="KW-1185">Reference proteome</keyword>
<keyword id="KW-0687">Ribonucleoprotein</keyword>
<keyword id="KW-0689">Ribosomal protein</keyword>
<reference key="1">
    <citation type="submission" date="2006-02" db="EMBL/GenBank/DDBJ databases">
        <title>Complete sequence of chromosome of Jannaschia sp. CCS1.</title>
        <authorList>
            <consortium name="US DOE Joint Genome Institute"/>
            <person name="Copeland A."/>
            <person name="Lucas S."/>
            <person name="Lapidus A."/>
            <person name="Barry K."/>
            <person name="Detter J.C."/>
            <person name="Glavina del Rio T."/>
            <person name="Hammon N."/>
            <person name="Israni S."/>
            <person name="Pitluck S."/>
            <person name="Brettin T."/>
            <person name="Bruce D."/>
            <person name="Han C."/>
            <person name="Tapia R."/>
            <person name="Gilna P."/>
            <person name="Chertkov O."/>
            <person name="Saunders E."/>
            <person name="Schmutz J."/>
            <person name="Larimer F."/>
            <person name="Land M."/>
            <person name="Kyrpides N."/>
            <person name="Lykidis A."/>
            <person name="Moran M.A."/>
            <person name="Belas R."/>
            <person name="Ye W."/>
            <person name="Buchan A."/>
            <person name="Gonzalez J.M."/>
            <person name="Schell M.A."/>
            <person name="Richardson P."/>
        </authorList>
    </citation>
    <scope>NUCLEOTIDE SEQUENCE [LARGE SCALE GENOMIC DNA]</scope>
    <source>
        <strain>CCS1</strain>
    </source>
</reference>
<dbReference type="EMBL" id="CP000264">
    <property type="protein sequence ID" value="ABD53666.1"/>
    <property type="molecule type" value="Genomic_DNA"/>
</dbReference>
<dbReference type="RefSeq" id="WP_011453874.1">
    <property type="nucleotide sequence ID" value="NC_007802.1"/>
</dbReference>
<dbReference type="SMR" id="Q28UE6"/>
<dbReference type="STRING" id="290400.Jann_0749"/>
<dbReference type="KEGG" id="jan:Jann_0749"/>
<dbReference type="eggNOG" id="COG0228">
    <property type="taxonomic scope" value="Bacteria"/>
</dbReference>
<dbReference type="HOGENOM" id="CLU_100590_3_1_5"/>
<dbReference type="OrthoDB" id="9807878at2"/>
<dbReference type="Proteomes" id="UP000008326">
    <property type="component" value="Chromosome"/>
</dbReference>
<dbReference type="GO" id="GO:0005737">
    <property type="term" value="C:cytoplasm"/>
    <property type="evidence" value="ECO:0007669"/>
    <property type="project" value="UniProtKB-ARBA"/>
</dbReference>
<dbReference type="GO" id="GO:0015935">
    <property type="term" value="C:small ribosomal subunit"/>
    <property type="evidence" value="ECO:0007669"/>
    <property type="project" value="TreeGrafter"/>
</dbReference>
<dbReference type="GO" id="GO:0003735">
    <property type="term" value="F:structural constituent of ribosome"/>
    <property type="evidence" value="ECO:0007669"/>
    <property type="project" value="InterPro"/>
</dbReference>
<dbReference type="GO" id="GO:0006412">
    <property type="term" value="P:translation"/>
    <property type="evidence" value="ECO:0007669"/>
    <property type="project" value="UniProtKB-UniRule"/>
</dbReference>
<dbReference type="Gene3D" id="3.30.1320.10">
    <property type="match status" value="1"/>
</dbReference>
<dbReference type="HAMAP" id="MF_00385">
    <property type="entry name" value="Ribosomal_bS16"/>
    <property type="match status" value="1"/>
</dbReference>
<dbReference type="InterPro" id="IPR000307">
    <property type="entry name" value="Ribosomal_bS16"/>
</dbReference>
<dbReference type="InterPro" id="IPR023803">
    <property type="entry name" value="Ribosomal_bS16_dom_sf"/>
</dbReference>
<dbReference type="NCBIfam" id="TIGR00002">
    <property type="entry name" value="S16"/>
    <property type="match status" value="1"/>
</dbReference>
<dbReference type="PANTHER" id="PTHR12919">
    <property type="entry name" value="30S RIBOSOMAL PROTEIN S16"/>
    <property type="match status" value="1"/>
</dbReference>
<dbReference type="PANTHER" id="PTHR12919:SF20">
    <property type="entry name" value="SMALL RIBOSOMAL SUBUNIT PROTEIN BS16M"/>
    <property type="match status" value="1"/>
</dbReference>
<dbReference type="Pfam" id="PF00886">
    <property type="entry name" value="Ribosomal_S16"/>
    <property type="match status" value="1"/>
</dbReference>
<dbReference type="SUPFAM" id="SSF54565">
    <property type="entry name" value="Ribosomal protein S16"/>
    <property type="match status" value="1"/>
</dbReference>